<reference key="1">
    <citation type="journal article" date="2000" name="Biochim. Biophys. Acta">
        <title>Differential developmental expression and cell type specificity of Dictyostelium catalases and their response to oxidative stress and UV-light.</title>
        <authorList>
            <person name="Garcia M.X.U."/>
            <person name="Foote C."/>
            <person name="van Es S."/>
            <person name="Devreotes P.N."/>
            <person name="Alexander S."/>
            <person name="Alexander H."/>
        </authorList>
    </citation>
    <scope>NUCLEOTIDE SEQUENCE [MRNA]</scope>
    <scope>DEVELOPMENTAL STAGE</scope>
    <source>
        <strain>AX3</strain>
    </source>
</reference>
<reference key="2">
    <citation type="journal article" date="2002" name="Nature">
        <title>Sequence and analysis of chromosome 2 of Dictyostelium discoideum.</title>
        <authorList>
            <person name="Gloeckner G."/>
            <person name="Eichinger L."/>
            <person name="Szafranski K."/>
            <person name="Pachebat J.A."/>
            <person name="Bankier A.T."/>
            <person name="Dear P.H."/>
            <person name="Lehmann R."/>
            <person name="Baumgart C."/>
            <person name="Parra G."/>
            <person name="Abril J.F."/>
            <person name="Guigo R."/>
            <person name="Kumpf K."/>
            <person name="Tunggal B."/>
            <person name="Cox E.C."/>
            <person name="Quail M.A."/>
            <person name="Platzer M."/>
            <person name="Rosenthal A."/>
            <person name="Noegel A.A."/>
        </authorList>
    </citation>
    <scope>NUCLEOTIDE SEQUENCE [LARGE SCALE GENOMIC DNA]</scope>
    <source>
        <strain>AX4</strain>
    </source>
</reference>
<reference key="3">
    <citation type="journal article" date="2005" name="Nature">
        <title>The genome of the social amoeba Dictyostelium discoideum.</title>
        <authorList>
            <person name="Eichinger L."/>
            <person name="Pachebat J.A."/>
            <person name="Gloeckner G."/>
            <person name="Rajandream M.A."/>
            <person name="Sucgang R."/>
            <person name="Berriman M."/>
            <person name="Song J."/>
            <person name="Olsen R."/>
            <person name="Szafranski K."/>
            <person name="Xu Q."/>
            <person name="Tunggal B."/>
            <person name="Kummerfeld S."/>
            <person name="Madera M."/>
            <person name="Konfortov B.A."/>
            <person name="Rivero F."/>
            <person name="Bankier A.T."/>
            <person name="Lehmann R."/>
            <person name="Hamlin N."/>
            <person name="Davies R."/>
            <person name="Gaudet P."/>
            <person name="Fey P."/>
            <person name="Pilcher K."/>
            <person name="Chen G."/>
            <person name="Saunders D."/>
            <person name="Sodergren E.J."/>
            <person name="Davis P."/>
            <person name="Kerhornou A."/>
            <person name="Nie X."/>
            <person name="Hall N."/>
            <person name="Anjard C."/>
            <person name="Hemphill L."/>
            <person name="Bason N."/>
            <person name="Farbrother P."/>
            <person name="Desany B."/>
            <person name="Just E."/>
            <person name="Morio T."/>
            <person name="Rost R."/>
            <person name="Churcher C.M."/>
            <person name="Cooper J."/>
            <person name="Haydock S."/>
            <person name="van Driessche N."/>
            <person name="Cronin A."/>
            <person name="Goodhead I."/>
            <person name="Muzny D.M."/>
            <person name="Mourier T."/>
            <person name="Pain A."/>
            <person name="Lu M."/>
            <person name="Harper D."/>
            <person name="Lindsay R."/>
            <person name="Hauser H."/>
            <person name="James K.D."/>
            <person name="Quiles M."/>
            <person name="Madan Babu M."/>
            <person name="Saito T."/>
            <person name="Buchrieser C."/>
            <person name="Wardroper A."/>
            <person name="Felder M."/>
            <person name="Thangavelu M."/>
            <person name="Johnson D."/>
            <person name="Knights A."/>
            <person name="Loulseged H."/>
            <person name="Mungall K.L."/>
            <person name="Oliver K."/>
            <person name="Price C."/>
            <person name="Quail M.A."/>
            <person name="Urushihara H."/>
            <person name="Hernandez J."/>
            <person name="Rabbinowitsch E."/>
            <person name="Steffen D."/>
            <person name="Sanders M."/>
            <person name="Ma J."/>
            <person name="Kohara Y."/>
            <person name="Sharp S."/>
            <person name="Simmonds M.N."/>
            <person name="Spiegler S."/>
            <person name="Tivey A."/>
            <person name="Sugano S."/>
            <person name="White B."/>
            <person name="Walker D."/>
            <person name="Woodward J.R."/>
            <person name="Winckler T."/>
            <person name="Tanaka Y."/>
            <person name="Shaulsky G."/>
            <person name="Schleicher M."/>
            <person name="Weinstock G.M."/>
            <person name="Rosenthal A."/>
            <person name="Cox E.C."/>
            <person name="Chisholm R.L."/>
            <person name="Gibbs R.A."/>
            <person name="Loomis W.F."/>
            <person name="Platzer M."/>
            <person name="Kay R.R."/>
            <person name="Williams J.G."/>
            <person name="Dear P.H."/>
            <person name="Noegel A.A."/>
            <person name="Barrell B.G."/>
            <person name="Kuspa A."/>
        </authorList>
    </citation>
    <scope>NUCLEOTIDE SEQUENCE [LARGE SCALE GENOMIC DNA]</scope>
    <source>
        <strain>AX4</strain>
    </source>
</reference>
<reference key="4">
    <citation type="journal article" date="2002" name="Microbiology">
        <title>Methanol and acriflavine resistance in Dictyostelium are caused by loss of catalase.</title>
        <authorList>
            <person name="Garcia M.X.U."/>
            <person name="Roberts C."/>
            <person name="Alexander H."/>
            <person name="Stewart A.M."/>
            <person name="Harwood A."/>
            <person name="Alexander S."/>
            <person name="Insall R.H."/>
        </authorList>
    </citation>
    <scope>FUNCTION</scope>
    <scope>DISRUPTION PHENOTYPE</scope>
</reference>
<organism>
    <name type="scientific">Dictyostelium discoideum</name>
    <name type="common">Social amoeba</name>
    <dbReference type="NCBI Taxonomy" id="44689"/>
    <lineage>
        <taxon>Eukaryota</taxon>
        <taxon>Amoebozoa</taxon>
        <taxon>Evosea</taxon>
        <taxon>Eumycetozoa</taxon>
        <taxon>Dictyostelia</taxon>
        <taxon>Dictyosteliales</taxon>
        <taxon>Dictyosteliaceae</taxon>
        <taxon>Dictyostelium</taxon>
    </lineage>
</organism>
<feature type="chain" id="PRO_0000084911" description="Catalase-A">
    <location>
        <begin position="1"/>
        <end position="496"/>
    </location>
</feature>
<feature type="short sequence motif" description="Microbody targeting signal" evidence="2">
    <location>
        <begin position="494"/>
        <end position="496"/>
    </location>
</feature>
<feature type="active site" evidence="3">
    <location>
        <position position="54"/>
    </location>
</feature>
<feature type="active site" evidence="3">
    <location>
        <position position="128"/>
    </location>
</feature>
<feature type="binding site" description="axial binding residue" evidence="1">
    <location>
        <position position="338"/>
    </location>
    <ligand>
        <name>heme</name>
        <dbReference type="ChEBI" id="CHEBI:30413"/>
    </ligand>
    <ligandPart>
        <name>Fe</name>
        <dbReference type="ChEBI" id="CHEBI:18248"/>
    </ligandPart>
</feature>
<feature type="sequence conflict" description="In Ref. 1; AAC36743." evidence="6" ref="1">
    <original>P</original>
    <variation>T</variation>
    <location>
        <position position="67"/>
    </location>
</feature>
<gene>
    <name type="primary">catA</name>
    <name type="synonym">cat</name>
    <name type="ORF">DDB_G0274595</name>
</gene>
<sequence length="496" mass="55680">MSAPVLTTSSGSPIDNNLNSMTAGVNGPILIQDFTLIDKLAHFDRERIPERVVHAKGAGAHGYFEVPSSDVPKWCKAKFLNKVGKRTPIFTRFSTVGGEKGSSDSERDPRGFAVKFYTEEGNFDMVGNNTPVFFIRDPSKFPDFIHTQKRNPQTNCKDPNMFWDFLGQTPESTHQVSILFSDRGTPKSYRHMHGFSSHTLKFVNAQGKPYWVKLHFTSETGIQNYTAEEAAKMSMNDPDSATRDLFETIAKGGEPAWKVSIQLMEFEDALKYRFNPFDVTKIWSHKDYPLIQIGRMVLNRNPENYFAEVEQAAFSPSHMVPGIEPSPDKMLQGRLFSYPDTHRHRLGVNYQQIPVNCPFAVKGGVKNYQRDGFMAVNGNGGKGPNYQPNSFGGPEPHPEFAQHKFDVSGFAARQPYNHPNDDFVQPGDLYRLMSEDAKSRFVSNLVGHMSGVTIKEIQVRAVSNFYKADKDLGARLCKGLGIDVNDVIKFAARSNL</sequence>
<accession>O77229</accession>
<accession>Q556B6</accession>
<accession>Q86A71</accession>
<dbReference type="EC" id="1.11.1.6" evidence="3"/>
<dbReference type="EMBL" id="AF090443">
    <property type="protein sequence ID" value="AAC36743.1"/>
    <property type="molecule type" value="mRNA"/>
</dbReference>
<dbReference type="EMBL" id="AAFI02000012">
    <property type="protein sequence ID" value="EAL70190.1"/>
    <property type="molecule type" value="Genomic_DNA"/>
</dbReference>
<dbReference type="RefSeq" id="XP_643894.1">
    <property type="nucleotide sequence ID" value="XM_638802.1"/>
</dbReference>
<dbReference type="SMR" id="O77229"/>
<dbReference type="FunCoup" id="O77229">
    <property type="interactions" value="391"/>
</dbReference>
<dbReference type="STRING" id="44689.O77229"/>
<dbReference type="PeroxiBase" id="4096">
    <property type="entry name" value="DdKat01"/>
</dbReference>
<dbReference type="PaxDb" id="44689-DDB0185123"/>
<dbReference type="EnsemblProtists" id="EAL70190">
    <property type="protein sequence ID" value="EAL70190"/>
    <property type="gene ID" value="DDB_G0274595"/>
</dbReference>
<dbReference type="GeneID" id="8619320"/>
<dbReference type="KEGG" id="ddi:DDB_G0274595"/>
<dbReference type="dictyBase" id="DDB_G0274595">
    <property type="gene designation" value="catA"/>
</dbReference>
<dbReference type="VEuPathDB" id="AmoebaDB:DDB_G0274595"/>
<dbReference type="eggNOG" id="KOG0047">
    <property type="taxonomic scope" value="Eukaryota"/>
</dbReference>
<dbReference type="HOGENOM" id="CLU_010645_2_0_1"/>
<dbReference type="InParanoid" id="O77229"/>
<dbReference type="OMA" id="KFRWNVF"/>
<dbReference type="PhylomeDB" id="O77229"/>
<dbReference type="Reactome" id="R-DDI-3299685">
    <property type="pathway name" value="Detoxification of Reactive Oxygen Species"/>
</dbReference>
<dbReference type="Reactome" id="R-DDI-6798695">
    <property type="pathway name" value="Neutrophil degranulation"/>
</dbReference>
<dbReference type="Reactome" id="R-DDI-9033241">
    <property type="pathway name" value="Peroxisomal protein import"/>
</dbReference>
<dbReference type="PRO" id="PR:O77229"/>
<dbReference type="Proteomes" id="UP000002195">
    <property type="component" value="Chromosome 2"/>
</dbReference>
<dbReference type="GO" id="GO:0005737">
    <property type="term" value="C:cytoplasm"/>
    <property type="evidence" value="ECO:0000318"/>
    <property type="project" value="GO_Central"/>
</dbReference>
<dbReference type="GO" id="GO:0005739">
    <property type="term" value="C:mitochondrion"/>
    <property type="evidence" value="ECO:0000318"/>
    <property type="project" value="GO_Central"/>
</dbReference>
<dbReference type="GO" id="GO:0005782">
    <property type="term" value="C:peroxisomal matrix"/>
    <property type="evidence" value="ECO:0007669"/>
    <property type="project" value="UniProtKB-SubCell"/>
</dbReference>
<dbReference type="GO" id="GO:0005777">
    <property type="term" value="C:peroxisome"/>
    <property type="evidence" value="ECO:0000314"/>
    <property type="project" value="dictyBase"/>
</dbReference>
<dbReference type="GO" id="GO:0045335">
    <property type="term" value="C:phagocytic vesicle"/>
    <property type="evidence" value="ECO:0007005"/>
    <property type="project" value="dictyBase"/>
</dbReference>
<dbReference type="GO" id="GO:0004096">
    <property type="term" value="F:catalase activity"/>
    <property type="evidence" value="ECO:0000314"/>
    <property type="project" value="dictyBase"/>
</dbReference>
<dbReference type="GO" id="GO:0020037">
    <property type="term" value="F:heme binding"/>
    <property type="evidence" value="ECO:0000318"/>
    <property type="project" value="GO_Central"/>
</dbReference>
<dbReference type="GO" id="GO:0046872">
    <property type="term" value="F:metal ion binding"/>
    <property type="evidence" value="ECO:0007669"/>
    <property type="project" value="UniProtKB-KW"/>
</dbReference>
<dbReference type="GO" id="GO:0042744">
    <property type="term" value="P:hydrogen peroxide catabolic process"/>
    <property type="evidence" value="ECO:0000314"/>
    <property type="project" value="dictyBase"/>
</dbReference>
<dbReference type="GO" id="GO:1904643">
    <property type="term" value="P:response to curcumin"/>
    <property type="evidence" value="ECO:0000314"/>
    <property type="project" value="dictyBase"/>
</dbReference>
<dbReference type="GO" id="GO:0042542">
    <property type="term" value="P:response to hydrogen peroxide"/>
    <property type="evidence" value="ECO:0000318"/>
    <property type="project" value="GO_Central"/>
</dbReference>
<dbReference type="GO" id="GO:0033986">
    <property type="term" value="P:response to methanol"/>
    <property type="evidence" value="ECO:0000315"/>
    <property type="project" value="dictyBase"/>
</dbReference>
<dbReference type="GO" id="GO:0006979">
    <property type="term" value="P:response to oxidative stress"/>
    <property type="evidence" value="ECO:0000314"/>
    <property type="project" value="dictyBase"/>
</dbReference>
<dbReference type="CDD" id="cd08156">
    <property type="entry name" value="catalase_clade_3"/>
    <property type="match status" value="1"/>
</dbReference>
<dbReference type="FunFam" id="2.40.180.10:FF:000001">
    <property type="entry name" value="Catalase"/>
    <property type="match status" value="1"/>
</dbReference>
<dbReference type="Gene3D" id="2.40.180.10">
    <property type="entry name" value="Catalase core domain"/>
    <property type="match status" value="1"/>
</dbReference>
<dbReference type="InterPro" id="IPR018028">
    <property type="entry name" value="Catalase"/>
</dbReference>
<dbReference type="InterPro" id="IPR040333">
    <property type="entry name" value="Catalase_3"/>
</dbReference>
<dbReference type="InterPro" id="IPR024708">
    <property type="entry name" value="Catalase_AS"/>
</dbReference>
<dbReference type="InterPro" id="IPR024711">
    <property type="entry name" value="Catalase_clade1/3"/>
</dbReference>
<dbReference type="InterPro" id="IPR011614">
    <property type="entry name" value="Catalase_core"/>
</dbReference>
<dbReference type="InterPro" id="IPR002226">
    <property type="entry name" value="Catalase_haem_BS"/>
</dbReference>
<dbReference type="InterPro" id="IPR010582">
    <property type="entry name" value="Catalase_immune_responsive"/>
</dbReference>
<dbReference type="InterPro" id="IPR020835">
    <property type="entry name" value="Catalase_sf"/>
</dbReference>
<dbReference type="PANTHER" id="PTHR11465">
    <property type="entry name" value="CATALASE"/>
    <property type="match status" value="1"/>
</dbReference>
<dbReference type="PANTHER" id="PTHR11465:SF9">
    <property type="entry name" value="CATALASE"/>
    <property type="match status" value="1"/>
</dbReference>
<dbReference type="Pfam" id="PF00199">
    <property type="entry name" value="Catalase"/>
    <property type="match status" value="1"/>
</dbReference>
<dbReference type="Pfam" id="PF06628">
    <property type="entry name" value="Catalase-rel"/>
    <property type="match status" value="1"/>
</dbReference>
<dbReference type="PIRSF" id="PIRSF038928">
    <property type="entry name" value="Catalase_clade1-3"/>
    <property type="match status" value="1"/>
</dbReference>
<dbReference type="PRINTS" id="PR00067">
    <property type="entry name" value="CATALASE"/>
</dbReference>
<dbReference type="SMART" id="SM01060">
    <property type="entry name" value="Catalase"/>
    <property type="match status" value="1"/>
</dbReference>
<dbReference type="SUPFAM" id="SSF56634">
    <property type="entry name" value="Heme-dependent catalase-like"/>
    <property type="match status" value="1"/>
</dbReference>
<dbReference type="PROSITE" id="PS00437">
    <property type="entry name" value="CATALASE_1"/>
    <property type="match status" value="1"/>
</dbReference>
<dbReference type="PROSITE" id="PS00438">
    <property type="entry name" value="CATALASE_2"/>
    <property type="match status" value="1"/>
</dbReference>
<dbReference type="PROSITE" id="PS51402">
    <property type="entry name" value="CATALASE_3"/>
    <property type="match status" value="1"/>
</dbReference>
<keyword id="KW-0349">Heme</keyword>
<keyword id="KW-0376">Hydrogen peroxide</keyword>
<keyword id="KW-0408">Iron</keyword>
<keyword id="KW-0479">Metal-binding</keyword>
<keyword id="KW-0560">Oxidoreductase</keyword>
<keyword id="KW-0575">Peroxidase</keyword>
<keyword id="KW-0576">Peroxisome</keyword>
<keyword id="KW-1185">Reference proteome</keyword>
<proteinExistence type="evidence at transcript level"/>
<comment type="function">
    <text evidence="5">Catalyzes the degradation of hydrogen peroxide (H(2)O(2)) generated by peroxisomal oxidases to water and oxygen, thereby protecting cells from the toxic effects of hydrogen peroxide.</text>
</comment>
<comment type="catalytic activity">
    <reaction evidence="3">
        <text>2 H2O2 = O2 + 2 H2O</text>
        <dbReference type="Rhea" id="RHEA:20309"/>
        <dbReference type="ChEBI" id="CHEBI:15377"/>
        <dbReference type="ChEBI" id="CHEBI:15379"/>
        <dbReference type="ChEBI" id="CHEBI:16240"/>
        <dbReference type="EC" id="1.11.1.6"/>
    </reaction>
</comment>
<comment type="cofactor">
    <cofactor evidence="1">
        <name>heme</name>
        <dbReference type="ChEBI" id="CHEBI:30413"/>
    </cofactor>
</comment>
<comment type="subcellular location">
    <subcellularLocation>
        <location evidence="1">Peroxisome matrix</location>
    </subcellularLocation>
</comment>
<comment type="developmental stage">
    <text evidence="4">Expressed throughout growth and development. Exclusively localized in the prestalk cells.</text>
</comment>
<comment type="disruption phenotype">
    <text evidence="5">Cells are resistant to methanol, acriflavine and thiabendazole.</text>
</comment>
<comment type="similarity">
    <text evidence="6">Belongs to the catalase family.</text>
</comment>
<evidence type="ECO:0000250" key="1">
    <source>
        <dbReference type="UniProtKB" id="P04040"/>
    </source>
</evidence>
<evidence type="ECO:0000255" key="2"/>
<evidence type="ECO:0000255" key="3">
    <source>
        <dbReference type="PROSITE-ProRule" id="PRU10013"/>
    </source>
</evidence>
<evidence type="ECO:0000269" key="4">
    <source>
    </source>
</evidence>
<evidence type="ECO:0000269" key="5">
    <source>
    </source>
</evidence>
<evidence type="ECO:0000305" key="6"/>
<protein>
    <recommendedName>
        <fullName>Catalase-A</fullName>
        <ecNumber evidence="3">1.11.1.6</ecNumber>
    </recommendedName>
</protein>
<name>CATA_DICDI</name>